<gene>
    <name type="ordered locus">Sfum_2948</name>
</gene>
<name>Y2948_SYNFM</name>
<keyword id="KW-1185">Reference proteome</keyword>
<dbReference type="EMBL" id="CP000478">
    <property type="protein sequence ID" value="ABK18622.1"/>
    <property type="molecule type" value="Genomic_DNA"/>
</dbReference>
<dbReference type="RefSeq" id="WP_011699786.1">
    <property type="nucleotide sequence ID" value="NC_008554.1"/>
</dbReference>
<dbReference type="SMR" id="A0LMH0"/>
<dbReference type="STRING" id="335543.Sfum_2948"/>
<dbReference type="KEGG" id="sfu:Sfum_2948"/>
<dbReference type="eggNOG" id="COG2848">
    <property type="taxonomic scope" value="Bacteria"/>
</dbReference>
<dbReference type="HOGENOM" id="CLU_048704_0_0_7"/>
<dbReference type="InParanoid" id="A0LMH0"/>
<dbReference type="OrthoDB" id="9763001at2"/>
<dbReference type="Proteomes" id="UP000001784">
    <property type="component" value="Chromosome"/>
</dbReference>
<dbReference type="CDD" id="cd08025">
    <property type="entry name" value="RNR_PFL_like_DUF711"/>
    <property type="match status" value="1"/>
</dbReference>
<dbReference type="Gene3D" id="3.20.70.20">
    <property type="match status" value="1"/>
</dbReference>
<dbReference type="HAMAP" id="MF_01221">
    <property type="entry name" value="UPF0210"/>
    <property type="match status" value="1"/>
</dbReference>
<dbReference type="InterPro" id="IPR007841">
    <property type="entry name" value="UPF0210"/>
</dbReference>
<dbReference type="NCBIfam" id="NF003700">
    <property type="entry name" value="PRK05313.1"/>
    <property type="match status" value="1"/>
</dbReference>
<dbReference type="PANTHER" id="PTHR37560:SF1">
    <property type="entry name" value="UPF0210 PROTEIN MJ1665"/>
    <property type="match status" value="1"/>
</dbReference>
<dbReference type="PANTHER" id="PTHR37560">
    <property type="entry name" value="UPF0210 PROTEIN SPR0218"/>
    <property type="match status" value="1"/>
</dbReference>
<dbReference type="Pfam" id="PF05167">
    <property type="entry name" value="DUF711"/>
    <property type="match status" value="1"/>
</dbReference>
<dbReference type="SUPFAM" id="SSF51998">
    <property type="entry name" value="PFL-like glycyl radical enzymes"/>
    <property type="match status" value="1"/>
</dbReference>
<comment type="subunit">
    <text evidence="1">Homodimer.</text>
</comment>
<comment type="similarity">
    <text evidence="1">Belongs to the UPF0210 family.</text>
</comment>
<feature type="chain" id="PRO_1000066780" description="UPF0210 protein Sfum_2948">
    <location>
        <begin position="1"/>
        <end position="457"/>
    </location>
</feature>
<evidence type="ECO:0000255" key="1">
    <source>
        <dbReference type="HAMAP-Rule" id="MF_01221"/>
    </source>
</evidence>
<protein>
    <recommendedName>
        <fullName evidence="1">UPF0210 protein Sfum_2948</fullName>
    </recommendedName>
</protein>
<reference key="1">
    <citation type="submission" date="2006-10" db="EMBL/GenBank/DDBJ databases">
        <title>Complete sequence of Syntrophobacter fumaroxidans MPOB.</title>
        <authorList>
            <consortium name="US DOE Joint Genome Institute"/>
            <person name="Copeland A."/>
            <person name="Lucas S."/>
            <person name="Lapidus A."/>
            <person name="Barry K."/>
            <person name="Detter J.C."/>
            <person name="Glavina del Rio T."/>
            <person name="Hammon N."/>
            <person name="Israni S."/>
            <person name="Pitluck S."/>
            <person name="Goltsman E.G."/>
            <person name="Martinez M."/>
            <person name="Schmutz J."/>
            <person name="Larimer F."/>
            <person name="Land M."/>
            <person name="Hauser L."/>
            <person name="Kyrpides N."/>
            <person name="Kim E."/>
            <person name="Boone D.R."/>
            <person name="Brockman F."/>
            <person name="Culley D."/>
            <person name="Ferry J."/>
            <person name="Gunsalus R."/>
            <person name="McInerney M.J."/>
            <person name="Morrison M."/>
            <person name="Plugge C."/>
            <person name="Rohlin L."/>
            <person name="Scholten J."/>
            <person name="Sieber J."/>
            <person name="Stams A.J.M."/>
            <person name="Worm P."/>
            <person name="Henstra A.M."/>
            <person name="Richardson P."/>
        </authorList>
    </citation>
    <scope>NUCLEOTIDE SEQUENCE [LARGE SCALE GENOMIC DNA]</scope>
    <source>
        <strain>DSM 10017 / MPOB</strain>
    </source>
</reference>
<sequence>MLSDREVLSTLEMLKNEHLDVRTVTLGVSLFDCAGHDPEKFKENVQRKIFRLAGNLVKVCDEIGIRYGIPVVNKRVAVSPIAVAACSFSRPQMVEVARKLDETAADIGIDFIGGFGALVEKGFTEGDRALIAAIPEALASTRRVCSSVNVASTRAGINMDAVYLMGKTIKDAAELTREADGIACAKLCVFANIPEDVPFMAGAYLGVGEPDSVINVGVSGPGVVKKAIDRARAANPHLDLGALSDIIKRTSFKVTRVGELIGRQVAEKLGVPFGVVDLSLAPTPNVGDSVGEIFQSLGLQSIGVPGTTAALALLNDAVKKGGAFASSYVGGLSGAFIPVSEDLNIAAAASRGYLSMEKLEAMTSVCSVGLDMVALAGDTSAETLAGIIADEMAIGVINKKTTAARLIPVPGKKAGEKASFGGLLGEAVIIAVSSNFGSREFISLGGRIPAPIHSLIN</sequence>
<accession>A0LMH0</accession>
<organism>
    <name type="scientific">Syntrophobacter fumaroxidans (strain DSM 10017 / MPOB)</name>
    <dbReference type="NCBI Taxonomy" id="335543"/>
    <lineage>
        <taxon>Bacteria</taxon>
        <taxon>Pseudomonadati</taxon>
        <taxon>Thermodesulfobacteriota</taxon>
        <taxon>Syntrophobacteria</taxon>
        <taxon>Syntrophobacterales</taxon>
        <taxon>Syntrophobacteraceae</taxon>
        <taxon>Syntrophobacter</taxon>
    </lineage>
</organism>
<proteinExistence type="inferred from homology"/>